<sequence length="77" mass="8881">MPKKIHPTWYPEAKVICNGELVMTVGSTKPEIHVEVWSGNHPFYTGTQKMIDTEGRVDRFLRKYKMGDKSSKKADQK</sequence>
<proteinExistence type="inferred from homology"/>
<gene>
    <name evidence="1" type="primary">rpmE</name>
    <name evidence="1" type="synonym">rpl31</name>
    <name type="ordered locus">MAE_52490</name>
</gene>
<protein>
    <recommendedName>
        <fullName evidence="1">Large ribosomal subunit protein bL31</fullName>
    </recommendedName>
    <alternativeName>
        <fullName evidence="2">50S ribosomal protein L31</fullName>
    </alternativeName>
</protein>
<comment type="function">
    <text evidence="1">Binds the 23S rRNA.</text>
</comment>
<comment type="subunit">
    <text evidence="1">Part of the 50S ribosomal subunit.</text>
</comment>
<comment type="similarity">
    <text evidence="1">Belongs to the bacterial ribosomal protein bL31 family. Type A subfamily.</text>
</comment>
<feature type="chain" id="PRO_1000126659" description="Large ribosomal subunit protein bL31">
    <location>
        <begin position="1"/>
        <end position="77"/>
    </location>
</feature>
<keyword id="KW-0687">Ribonucleoprotein</keyword>
<keyword id="KW-0689">Ribosomal protein</keyword>
<keyword id="KW-0694">RNA-binding</keyword>
<keyword id="KW-0699">rRNA-binding</keyword>
<organism>
    <name type="scientific">Microcystis aeruginosa (strain NIES-843 / IAM M-2473)</name>
    <dbReference type="NCBI Taxonomy" id="449447"/>
    <lineage>
        <taxon>Bacteria</taxon>
        <taxon>Bacillati</taxon>
        <taxon>Cyanobacteriota</taxon>
        <taxon>Cyanophyceae</taxon>
        <taxon>Oscillatoriophycideae</taxon>
        <taxon>Chroococcales</taxon>
        <taxon>Microcystaceae</taxon>
        <taxon>Microcystis</taxon>
    </lineage>
</organism>
<accession>B0JY33</accession>
<evidence type="ECO:0000255" key="1">
    <source>
        <dbReference type="HAMAP-Rule" id="MF_00501"/>
    </source>
</evidence>
<evidence type="ECO:0000305" key="2"/>
<reference key="1">
    <citation type="journal article" date="2007" name="DNA Res.">
        <title>Complete genomic structure of the bloom-forming toxic cyanobacterium Microcystis aeruginosa NIES-843.</title>
        <authorList>
            <person name="Kaneko T."/>
            <person name="Nakajima N."/>
            <person name="Okamoto S."/>
            <person name="Suzuki I."/>
            <person name="Tanabe Y."/>
            <person name="Tamaoki M."/>
            <person name="Nakamura Y."/>
            <person name="Kasai F."/>
            <person name="Watanabe A."/>
            <person name="Kawashima K."/>
            <person name="Kishida Y."/>
            <person name="Ono A."/>
            <person name="Shimizu Y."/>
            <person name="Takahashi C."/>
            <person name="Minami C."/>
            <person name="Fujishiro T."/>
            <person name="Kohara M."/>
            <person name="Katoh M."/>
            <person name="Nakazaki N."/>
            <person name="Nakayama S."/>
            <person name="Yamada M."/>
            <person name="Tabata S."/>
            <person name="Watanabe M.M."/>
        </authorList>
    </citation>
    <scope>NUCLEOTIDE SEQUENCE [LARGE SCALE GENOMIC DNA]</scope>
    <source>
        <strain>NIES-843 / IAM M-247</strain>
    </source>
</reference>
<dbReference type="EMBL" id="AP009552">
    <property type="protein sequence ID" value="BAG05071.1"/>
    <property type="molecule type" value="Genomic_DNA"/>
</dbReference>
<dbReference type="RefSeq" id="WP_002760058.1">
    <property type="nucleotide sequence ID" value="NC_010296.1"/>
</dbReference>
<dbReference type="STRING" id="449447.MAE_52490"/>
<dbReference type="PaxDb" id="449447-MAE_52490"/>
<dbReference type="EnsemblBacteria" id="BAG05071">
    <property type="protein sequence ID" value="BAG05071"/>
    <property type="gene ID" value="MAE_52490"/>
</dbReference>
<dbReference type="KEGG" id="mar:MAE_52490"/>
<dbReference type="eggNOG" id="COG0254">
    <property type="taxonomic scope" value="Bacteria"/>
</dbReference>
<dbReference type="HOGENOM" id="CLU_114306_1_2_3"/>
<dbReference type="BioCyc" id="MAER449447:MAE_RS22815-MONOMER"/>
<dbReference type="Proteomes" id="UP000001510">
    <property type="component" value="Chromosome"/>
</dbReference>
<dbReference type="GO" id="GO:1990904">
    <property type="term" value="C:ribonucleoprotein complex"/>
    <property type="evidence" value="ECO:0007669"/>
    <property type="project" value="UniProtKB-KW"/>
</dbReference>
<dbReference type="GO" id="GO:0005840">
    <property type="term" value="C:ribosome"/>
    <property type="evidence" value="ECO:0007669"/>
    <property type="project" value="UniProtKB-KW"/>
</dbReference>
<dbReference type="GO" id="GO:0019843">
    <property type="term" value="F:rRNA binding"/>
    <property type="evidence" value="ECO:0007669"/>
    <property type="project" value="UniProtKB-KW"/>
</dbReference>
<dbReference type="GO" id="GO:0003735">
    <property type="term" value="F:structural constituent of ribosome"/>
    <property type="evidence" value="ECO:0007669"/>
    <property type="project" value="InterPro"/>
</dbReference>
<dbReference type="GO" id="GO:0006412">
    <property type="term" value="P:translation"/>
    <property type="evidence" value="ECO:0007669"/>
    <property type="project" value="UniProtKB-UniRule"/>
</dbReference>
<dbReference type="Gene3D" id="4.10.830.30">
    <property type="entry name" value="Ribosomal protein L31"/>
    <property type="match status" value="1"/>
</dbReference>
<dbReference type="HAMAP" id="MF_00501">
    <property type="entry name" value="Ribosomal_bL31_1"/>
    <property type="match status" value="1"/>
</dbReference>
<dbReference type="InterPro" id="IPR034704">
    <property type="entry name" value="Ribosomal_bL28/bL31-like_sf"/>
</dbReference>
<dbReference type="InterPro" id="IPR002150">
    <property type="entry name" value="Ribosomal_bL31"/>
</dbReference>
<dbReference type="InterPro" id="IPR027491">
    <property type="entry name" value="Ribosomal_bL31_A"/>
</dbReference>
<dbReference type="InterPro" id="IPR042105">
    <property type="entry name" value="Ribosomal_bL31_sf"/>
</dbReference>
<dbReference type="NCBIfam" id="TIGR00105">
    <property type="entry name" value="L31"/>
    <property type="match status" value="1"/>
</dbReference>
<dbReference type="NCBIfam" id="NF001809">
    <property type="entry name" value="PRK00528.1"/>
    <property type="match status" value="1"/>
</dbReference>
<dbReference type="PANTHER" id="PTHR33280">
    <property type="entry name" value="50S RIBOSOMAL PROTEIN L31, CHLOROPLASTIC"/>
    <property type="match status" value="1"/>
</dbReference>
<dbReference type="PANTHER" id="PTHR33280:SF1">
    <property type="entry name" value="LARGE RIBOSOMAL SUBUNIT PROTEIN BL31C"/>
    <property type="match status" value="1"/>
</dbReference>
<dbReference type="Pfam" id="PF01197">
    <property type="entry name" value="Ribosomal_L31"/>
    <property type="match status" value="1"/>
</dbReference>
<dbReference type="PRINTS" id="PR01249">
    <property type="entry name" value="RIBOSOMALL31"/>
</dbReference>
<dbReference type="SUPFAM" id="SSF143800">
    <property type="entry name" value="L28p-like"/>
    <property type="match status" value="1"/>
</dbReference>
<dbReference type="PROSITE" id="PS01143">
    <property type="entry name" value="RIBOSOMAL_L31"/>
    <property type="match status" value="1"/>
</dbReference>
<name>RL31_MICAN</name>